<organism>
    <name type="scientific">Sorghum bicolor</name>
    <name type="common">Sorghum</name>
    <name type="synonym">Sorghum vulgare</name>
    <dbReference type="NCBI Taxonomy" id="4558"/>
    <lineage>
        <taxon>Eukaryota</taxon>
        <taxon>Viridiplantae</taxon>
        <taxon>Streptophyta</taxon>
        <taxon>Embryophyta</taxon>
        <taxon>Tracheophyta</taxon>
        <taxon>Spermatophyta</taxon>
        <taxon>Magnoliopsida</taxon>
        <taxon>Liliopsida</taxon>
        <taxon>Poales</taxon>
        <taxon>Poaceae</taxon>
        <taxon>PACMAD clade</taxon>
        <taxon>Panicoideae</taxon>
        <taxon>Andropogonodae</taxon>
        <taxon>Andropogoneae</taxon>
        <taxon>Sorghinae</taxon>
        <taxon>Sorghum</taxon>
    </lineage>
</organism>
<accession>C5XNN6</accession>
<feature type="transit peptide" description="Chloroplast" evidence="1">
    <location>
        <begin position="1"/>
        <end position="43"/>
    </location>
</feature>
<feature type="chain" id="PRO_0000415865" description="Thiamine thiazole synthase 1, chloroplastic">
    <location>
        <begin position="44"/>
        <end position="354"/>
    </location>
</feature>
<feature type="binding site" evidence="1">
    <location>
        <position position="96"/>
    </location>
    <ligand>
        <name>substrate</name>
    </ligand>
</feature>
<feature type="binding site" evidence="1">
    <location>
        <begin position="116"/>
        <end position="117"/>
    </location>
    <ligand>
        <name>substrate</name>
    </ligand>
</feature>
<feature type="binding site" evidence="1">
    <location>
        <position position="124"/>
    </location>
    <ligand>
        <name>substrate</name>
    </ligand>
</feature>
<feature type="binding site" evidence="1">
    <location>
        <position position="190"/>
    </location>
    <ligand>
        <name>substrate</name>
    </ligand>
</feature>
<feature type="binding site" evidence="1">
    <location>
        <position position="221"/>
    </location>
    <ligand>
        <name>substrate</name>
    </ligand>
</feature>
<feature type="binding site" evidence="1">
    <location>
        <position position="236"/>
    </location>
    <ligand>
        <name>substrate</name>
    </ligand>
</feature>
<feature type="binding site" evidence="1">
    <location>
        <position position="288"/>
    </location>
    <ligand>
        <name>substrate</name>
    </ligand>
</feature>
<feature type="binding site" evidence="1">
    <location>
        <begin position="298"/>
        <end position="300"/>
    </location>
    <ligand>
        <name>substrate</name>
    </ligand>
</feature>
<feature type="modified residue" description="2,3-didehydroalanine (Cys)" evidence="1">
    <location>
        <position position="219"/>
    </location>
</feature>
<proteinExistence type="inferred from homology"/>
<keyword id="KW-0150">Chloroplast</keyword>
<keyword id="KW-0408">Iron</keyword>
<keyword id="KW-0479">Metal-binding</keyword>
<keyword id="KW-0520">NAD</keyword>
<keyword id="KW-0934">Plastid</keyword>
<keyword id="KW-1185">Reference proteome</keyword>
<keyword id="KW-0784">Thiamine biosynthesis</keyword>
<keyword id="KW-0808">Transferase</keyword>
<keyword id="KW-0809">Transit peptide</keyword>
<gene>
    <name evidence="1" type="primary">THI1-1</name>
    <name type="ordered locus">Sb03g025520</name>
</gene>
<sequence length="354" mass="36838">MATTAASSLLKSSFAGSRLPSATRAPSSVVVSTGGAPRTAAISASISSSNPPYDLTSFKFSPIKESIVSREMTRRYMTDMITHADTDVVIVGAGSAGLSCAYELSKDPTVRVAIVEQSVSPGGGAWLGGQLFSAMVVRKPAHLFLDELGVAYDEAADDYVVVKHAALFTSTVMSAVLARPNVKLFNAVAVEDLIVKGGRVGGVVTNWALVSMNHDTQSCMDPNVMEAKVVVSSCGHDGPFGATGVKRLQDIGMIAAVPGMKALDMNAAEDAIVRLTREVVPGMIVTGMEVAEIDGAPRMGPTFGAMMISGQKAAHLALKALGRPNAVDGTIPKVSPALREEFVIASKDDEVVDA</sequence>
<dbReference type="EC" id="2.4.2.60" evidence="1"/>
<dbReference type="EMBL" id="CM000762">
    <property type="protein sequence ID" value="EES03134.1"/>
    <property type="molecule type" value="Genomic_DNA"/>
</dbReference>
<dbReference type="RefSeq" id="XP_002458014.1">
    <property type="nucleotide sequence ID" value="XM_002457969.1"/>
</dbReference>
<dbReference type="SMR" id="C5XNN6"/>
<dbReference type="FunCoup" id="C5XNN6">
    <property type="interactions" value="715"/>
</dbReference>
<dbReference type="STRING" id="4558.C5XNN6"/>
<dbReference type="EnsemblPlants" id="EES03134">
    <property type="protein sequence ID" value="EES03134"/>
    <property type="gene ID" value="SORBI_3003G191000"/>
</dbReference>
<dbReference type="GeneID" id="8078187"/>
<dbReference type="Gramene" id="EES03134">
    <property type="protein sequence ID" value="EES03134"/>
    <property type="gene ID" value="SORBI_3003G191000"/>
</dbReference>
<dbReference type="KEGG" id="sbi:8078187"/>
<dbReference type="eggNOG" id="KOG2960">
    <property type="taxonomic scope" value="Eukaryota"/>
</dbReference>
<dbReference type="HOGENOM" id="CLU_053727_1_0_1"/>
<dbReference type="InParanoid" id="C5XNN6"/>
<dbReference type="OMA" id="FKFQPIQ"/>
<dbReference type="OrthoDB" id="410463at2759"/>
<dbReference type="Proteomes" id="UP000000768">
    <property type="component" value="Chromosome 3"/>
</dbReference>
<dbReference type="GO" id="GO:0009570">
    <property type="term" value="C:chloroplast stroma"/>
    <property type="evidence" value="ECO:0007669"/>
    <property type="project" value="UniProtKB-UniRule"/>
</dbReference>
<dbReference type="GO" id="GO:0005829">
    <property type="term" value="C:cytosol"/>
    <property type="evidence" value="ECO:0007669"/>
    <property type="project" value="UniProtKB-UniRule"/>
</dbReference>
<dbReference type="GO" id="GO:0160205">
    <property type="term" value="F:cysteine-dependent adenosine diphosphate thiazole synthase activity"/>
    <property type="evidence" value="ECO:0007669"/>
    <property type="project" value="UniProtKB-EC"/>
</dbReference>
<dbReference type="GO" id="GO:0005506">
    <property type="term" value="F:iron ion binding"/>
    <property type="evidence" value="ECO:0000318"/>
    <property type="project" value="GO_Central"/>
</dbReference>
<dbReference type="GO" id="GO:0009228">
    <property type="term" value="P:thiamine biosynthetic process"/>
    <property type="evidence" value="ECO:0007669"/>
    <property type="project" value="UniProtKB-UniRule"/>
</dbReference>
<dbReference type="GO" id="GO:0052837">
    <property type="term" value="P:thiazole biosynthetic process"/>
    <property type="evidence" value="ECO:0000318"/>
    <property type="project" value="GO_Central"/>
</dbReference>
<dbReference type="FunFam" id="3.50.50.60:FF:000070">
    <property type="entry name" value="Thiamine thiazole synthase, chloroplastic"/>
    <property type="match status" value="1"/>
</dbReference>
<dbReference type="Gene3D" id="6.10.250.2840">
    <property type="match status" value="1"/>
</dbReference>
<dbReference type="Gene3D" id="3.50.50.60">
    <property type="entry name" value="FAD/NAD(P)-binding domain"/>
    <property type="match status" value="1"/>
</dbReference>
<dbReference type="HAMAP" id="MF_03158">
    <property type="entry name" value="THI4"/>
    <property type="match status" value="1"/>
</dbReference>
<dbReference type="InterPro" id="IPR036188">
    <property type="entry name" value="FAD/NAD-bd_sf"/>
</dbReference>
<dbReference type="InterPro" id="IPR027495">
    <property type="entry name" value="Sti35"/>
</dbReference>
<dbReference type="InterPro" id="IPR002922">
    <property type="entry name" value="Thi4_fam"/>
</dbReference>
<dbReference type="NCBIfam" id="TIGR00292">
    <property type="entry name" value="sulfide-dependent adenosine diphosphate thiazole synthase"/>
    <property type="match status" value="1"/>
</dbReference>
<dbReference type="PANTHER" id="PTHR43422">
    <property type="entry name" value="THIAMINE THIAZOLE SYNTHASE"/>
    <property type="match status" value="1"/>
</dbReference>
<dbReference type="PANTHER" id="PTHR43422:SF9">
    <property type="entry name" value="THIAMINE THIAZOLE SYNTHASE 2, CHLOROPLASTIC"/>
    <property type="match status" value="1"/>
</dbReference>
<dbReference type="Pfam" id="PF01946">
    <property type="entry name" value="Thi4"/>
    <property type="match status" value="1"/>
</dbReference>
<dbReference type="PRINTS" id="PR00368">
    <property type="entry name" value="FADPNR"/>
</dbReference>
<dbReference type="SUPFAM" id="SSF51905">
    <property type="entry name" value="FAD/NAD(P)-binding domain"/>
    <property type="match status" value="1"/>
</dbReference>
<evidence type="ECO:0000255" key="1">
    <source>
        <dbReference type="HAMAP-Rule" id="MF_03158"/>
    </source>
</evidence>
<comment type="function">
    <text evidence="1">Involved in biosynthesis of the thiamine precursor thiazole. Catalyzes the conversion of NAD and glycine to adenosine diphosphate 5-(2-hydroxyethyl)-4-methylthiazole-2-carboxylic acid (ADT), an adenylated thiazole intermediate. The reaction includes an iron-dependent sulfide transfer from a conserved cysteine residue of the protein to a thiazole intermediate. The enzyme can only undergo a single turnover, which suggests it is a suicide enzyme. May have additional roles in adaptation to various stress conditions and in DNA damage tolerance.</text>
</comment>
<comment type="catalytic activity">
    <reaction evidence="1">
        <text>[ADP-thiazole synthase]-L-cysteine + glycine + NAD(+) = [ADP-thiazole synthase]-dehydroalanine + ADP-5-ethyl-4-methylthiazole-2-carboxylate + nicotinamide + 3 H2O + 2 H(+)</text>
        <dbReference type="Rhea" id="RHEA:55708"/>
        <dbReference type="Rhea" id="RHEA-COMP:14264"/>
        <dbReference type="Rhea" id="RHEA-COMP:14265"/>
        <dbReference type="ChEBI" id="CHEBI:15377"/>
        <dbReference type="ChEBI" id="CHEBI:15378"/>
        <dbReference type="ChEBI" id="CHEBI:17154"/>
        <dbReference type="ChEBI" id="CHEBI:29950"/>
        <dbReference type="ChEBI" id="CHEBI:57305"/>
        <dbReference type="ChEBI" id="CHEBI:57540"/>
        <dbReference type="ChEBI" id="CHEBI:90873"/>
        <dbReference type="ChEBI" id="CHEBI:139151"/>
        <dbReference type="EC" id="2.4.2.60"/>
    </reaction>
</comment>
<comment type="cofactor">
    <cofactor evidence="1">
        <name>Fe cation</name>
        <dbReference type="ChEBI" id="CHEBI:24875"/>
    </cofactor>
    <text evidence="1">Binds 1 Fe cation per subunit.</text>
</comment>
<comment type="subunit">
    <text evidence="1">Homooctamer.</text>
</comment>
<comment type="subcellular location">
    <subcellularLocation>
        <location evidence="1">Plastid</location>
        <location evidence="1">Chloroplast</location>
    </subcellularLocation>
</comment>
<comment type="PTM">
    <text evidence="1">During the catalytic reaction, a sulfide is transferred from Cys-219 to a reaction intermediate, generating a dehydroalanine residue.</text>
</comment>
<comment type="similarity">
    <text evidence="1">Belongs to the THI4 family.</text>
</comment>
<name>THI41_SORBI</name>
<protein>
    <recommendedName>
        <fullName evidence="1">Thiamine thiazole synthase 1, chloroplastic</fullName>
        <ecNumber evidence="1">2.4.2.60</ecNumber>
    </recommendedName>
    <alternativeName>
        <fullName evidence="1">Thiazole biosynthetic enzyme 1</fullName>
    </alternativeName>
</protein>
<reference key="1">
    <citation type="journal article" date="2009" name="Nature">
        <title>The Sorghum bicolor genome and the diversification of grasses.</title>
        <authorList>
            <person name="Paterson A.H."/>
            <person name="Bowers J.E."/>
            <person name="Bruggmann R."/>
            <person name="Dubchak I."/>
            <person name="Grimwood J."/>
            <person name="Gundlach H."/>
            <person name="Haberer G."/>
            <person name="Hellsten U."/>
            <person name="Mitros T."/>
            <person name="Poliakov A."/>
            <person name="Schmutz J."/>
            <person name="Spannagl M."/>
            <person name="Tang H."/>
            <person name="Wang X."/>
            <person name="Wicker T."/>
            <person name="Bharti A.K."/>
            <person name="Chapman J."/>
            <person name="Feltus F.A."/>
            <person name="Gowik U."/>
            <person name="Grigoriev I.V."/>
            <person name="Lyons E."/>
            <person name="Maher C.A."/>
            <person name="Martis M."/>
            <person name="Narechania A."/>
            <person name="Otillar R.P."/>
            <person name="Penning B.W."/>
            <person name="Salamov A.A."/>
            <person name="Wang Y."/>
            <person name="Zhang L."/>
            <person name="Carpita N.C."/>
            <person name="Freeling M."/>
            <person name="Gingle A.R."/>
            <person name="Hash C.T."/>
            <person name="Keller B."/>
            <person name="Klein P."/>
            <person name="Kresovich S."/>
            <person name="McCann M.C."/>
            <person name="Ming R."/>
            <person name="Peterson D.G."/>
            <person name="Mehboob-ur-Rahman M."/>
            <person name="Ware D."/>
            <person name="Westhoff P."/>
            <person name="Mayer K.F.X."/>
            <person name="Messing J."/>
            <person name="Rokhsar D.S."/>
        </authorList>
    </citation>
    <scope>NUCLEOTIDE SEQUENCE [LARGE SCALE GENOMIC DNA]</scope>
    <source>
        <strain>cv. BTx623</strain>
    </source>
</reference>
<reference key="2">
    <citation type="journal article" date="2018" name="Plant J.">
        <title>The Sorghum bicolor reference genome: improved assembly, gene annotations, a transcriptome atlas, and signatures of genome organization.</title>
        <authorList>
            <person name="McCormick R.F."/>
            <person name="Truong S.K."/>
            <person name="Sreedasyam A."/>
            <person name="Jenkins J."/>
            <person name="Shu S."/>
            <person name="Sims D."/>
            <person name="Kennedy M."/>
            <person name="Amirebrahimi M."/>
            <person name="Weers B.D."/>
            <person name="McKinley B."/>
            <person name="Mattison A."/>
            <person name="Morishige D.T."/>
            <person name="Grimwood J."/>
            <person name="Schmutz J."/>
            <person name="Mullet J.E."/>
        </authorList>
    </citation>
    <scope>GENOME REANNOTATION</scope>
    <source>
        <strain>cv. BTx623</strain>
    </source>
</reference>